<proteinExistence type="inferred from homology"/>
<organism>
    <name type="scientific">Salmonella agona (strain SL483)</name>
    <dbReference type="NCBI Taxonomy" id="454166"/>
    <lineage>
        <taxon>Bacteria</taxon>
        <taxon>Pseudomonadati</taxon>
        <taxon>Pseudomonadota</taxon>
        <taxon>Gammaproteobacteria</taxon>
        <taxon>Enterobacterales</taxon>
        <taxon>Enterobacteriaceae</taxon>
        <taxon>Salmonella</taxon>
    </lineage>
</organism>
<feature type="chain" id="PRO_1000092244" description="Adenylyl-sulfate kinase">
    <location>
        <begin position="1"/>
        <end position="201"/>
    </location>
</feature>
<feature type="active site" description="Phosphoserine intermediate" evidence="1">
    <location>
        <position position="109"/>
    </location>
</feature>
<feature type="binding site" evidence="1">
    <location>
        <begin position="35"/>
        <end position="42"/>
    </location>
    <ligand>
        <name>ATP</name>
        <dbReference type="ChEBI" id="CHEBI:30616"/>
    </ligand>
</feature>
<sequence>MALHDENVVWHSHPVTVAAREQLHGHRGVVLWFTGLSGSGKSTVAGALEEALHQRGVSTYLLDGDNVRHGLCRDLGFSDADRQENIRRVGEVASLMADAGLIVLTAFISPHRAERQLVKERVGHDRFIEIYVNTPLAICEQRDPKGLYKKARAGELRNFTGIDAIYEAPDSPQVHLNGEQLVTNLVSQLLDLLRRRDIIRS</sequence>
<reference key="1">
    <citation type="journal article" date="2011" name="J. Bacteriol.">
        <title>Comparative genomics of 28 Salmonella enterica isolates: evidence for CRISPR-mediated adaptive sublineage evolution.</title>
        <authorList>
            <person name="Fricke W.F."/>
            <person name="Mammel M.K."/>
            <person name="McDermott P.F."/>
            <person name="Tartera C."/>
            <person name="White D.G."/>
            <person name="Leclerc J.E."/>
            <person name="Ravel J."/>
            <person name="Cebula T.A."/>
        </authorList>
    </citation>
    <scope>NUCLEOTIDE SEQUENCE [LARGE SCALE GENOMIC DNA]</scope>
    <source>
        <strain>SL483</strain>
    </source>
</reference>
<evidence type="ECO:0000255" key="1">
    <source>
        <dbReference type="HAMAP-Rule" id="MF_00065"/>
    </source>
</evidence>
<protein>
    <recommendedName>
        <fullName evidence="1">Adenylyl-sulfate kinase</fullName>
        <ecNumber evidence="1">2.7.1.25</ecNumber>
    </recommendedName>
    <alternativeName>
        <fullName evidence="1">APS kinase</fullName>
    </alternativeName>
    <alternativeName>
        <fullName evidence="1">ATP adenosine-5'-phosphosulfate 3'-phosphotransferase</fullName>
    </alternativeName>
    <alternativeName>
        <fullName evidence="1">Adenosine-5'-phosphosulfate kinase</fullName>
    </alternativeName>
</protein>
<keyword id="KW-0067">ATP-binding</keyword>
<keyword id="KW-0418">Kinase</keyword>
<keyword id="KW-0547">Nucleotide-binding</keyword>
<keyword id="KW-0597">Phosphoprotein</keyword>
<keyword id="KW-0808">Transferase</keyword>
<dbReference type="EC" id="2.7.1.25" evidence="1"/>
<dbReference type="EMBL" id="CP001138">
    <property type="protein sequence ID" value="ACH50864.1"/>
    <property type="molecule type" value="Genomic_DNA"/>
</dbReference>
<dbReference type="RefSeq" id="WP_001173663.1">
    <property type="nucleotide sequence ID" value="NC_011149.1"/>
</dbReference>
<dbReference type="SMR" id="B5F414"/>
<dbReference type="KEGG" id="sea:SeAg_B3058"/>
<dbReference type="HOGENOM" id="CLU_046932_1_0_6"/>
<dbReference type="UniPathway" id="UPA00140">
    <property type="reaction ID" value="UER00205"/>
</dbReference>
<dbReference type="Proteomes" id="UP000008819">
    <property type="component" value="Chromosome"/>
</dbReference>
<dbReference type="GO" id="GO:0004020">
    <property type="term" value="F:adenylylsulfate kinase activity"/>
    <property type="evidence" value="ECO:0007669"/>
    <property type="project" value="UniProtKB-UniRule"/>
</dbReference>
<dbReference type="GO" id="GO:0005524">
    <property type="term" value="F:ATP binding"/>
    <property type="evidence" value="ECO:0007669"/>
    <property type="project" value="UniProtKB-UniRule"/>
</dbReference>
<dbReference type="GO" id="GO:0070814">
    <property type="term" value="P:hydrogen sulfide biosynthetic process"/>
    <property type="evidence" value="ECO:0007669"/>
    <property type="project" value="UniProtKB-UniRule"/>
</dbReference>
<dbReference type="GO" id="GO:0000103">
    <property type="term" value="P:sulfate assimilation"/>
    <property type="evidence" value="ECO:0007669"/>
    <property type="project" value="UniProtKB-UniRule"/>
</dbReference>
<dbReference type="CDD" id="cd02027">
    <property type="entry name" value="APSK"/>
    <property type="match status" value="1"/>
</dbReference>
<dbReference type="FunFam" id="3.40.50.300:FF:000212">
    <property type="entry name" value="Adenylyl-sulfate kinase"/>
    <property type="match status" value="1"/>
</dbReference>
<dbReference type="Gene3D" id="3.40.50.300">
    <property type="entry name" value="P-loop containing nucleotide triphosphate hydrolases"/>
    <property type="match status" value="1"/>
</dbReference>
<dbReference type="HAMAP" id="MF_00065">
    <property type="entry name" value="Adenylyl_sulf_kinase"/>
    <property type="match status" value="1"/>
</dbReference>
<dbReference type="InterPro" id="IPR002891">
    <property type="entry name" value="APS_kinase"/>
</dbReference>
<dbReference type="InterPro" id="IPR027417">
    <property type="entry name" value="P-loop_NTPase"/>
</dbReference>
<dbReference type="NCBIfam" id="TIGR00455">
    <property type="entry name" value="apsK"/>
    <property type="match status" value="1"/>
</dbReference>
<dbReference type="NCBIfam" id="NF003013">
    <property type="entry name" value="PRK03846.1"/>
    <property type="match status" value="1"/>
</dbReference>
<dbReference type="PANTHER" id="PTHR11055:SF63">
    <property type="entry name" value="ADENYLYL-SULFATE KINASE 1, CHLOROPLASTIC"/>
    <property type="match status" value="1"/>
</dbReference>
<dbReference type="PANTHER" id="PTHR11055">
    <property type="entry name" value="BIFUNCTIONAL 3'-PHOSPHOADENOSINE 5'-PHOSPHOSULFATE SYNTHASE"/>
    <property type="match status" value="1"/>
</dbReference>
<dbReference type="Pfam" id="PF01583">
    <property type="entry name" value="APS_kinase"/>
    <property type="match status" value="1"/>
</dbReference>
<dbReference type="SUPFAM" id="SSF52540">
    <property type="entry name" value="P-loop containing nucleoside triphosphate hydrolases"/>
    <property type="match status" value="1"/>
</dbReference>
<accession>B5F414</accession>
<gene>
    <name evidence="1" type="primary">cysC</name>
    <name type="ordered locus">SeAg_B3058</name>
</gene>
<comment type="function">
    <text evidence="1">Catalyzes the synthesis of activated sulfate.</text>
</comment>
<comment type="catalytic activity">
    <reaction evidence="1">
        <text>adenosine 5'-phosphosulfate + ATP = 3'-phosphoadenylyl sulfate + ADP + H(+)</text>
        <dbReference type="Rhea" id="RHEA:24152"/>
        <dbReference type="ChEBI" id="CHEBI:15378"/>
        <dbReference type="ChEBI" id="CHEBI:30616"/>
        <dbReference type="ChEBI" id="CHEBI:58243"/>
        <dbReference type="ChEBI" id="CHEBI:58339"/>
        <dbReference type="ChEBI" id="CHEBI:456216"/>
        <dbReference type="EC" id="2.7.1.25"/>
    </reaction>
</comment>
<comment type="pathway">
    <text evidence="1">Sulfur metabolism; hydrogen sulfide biosynthesis; sulfite from sulfate: step 2/3.</text>
</comment>
<comment type="similarity">
    <text evidence="1">Belongs to the APS kinase family.</text>
</comment>
<name>CYSC_SALA4</name>